<name>RL17_MYCTO</name>
<evidence type="ECO:0000255" key="1">
    <source>
        <dbReference type="HAMAP-Rule" id="MF_01368"/>
    </source>
</evidence>
<evidence type="ECO:0000256" key="2">
    <source>
        <dbReference type="SAM" id="MobiDB-lite"/>
    </source>
</evidence>
<evidence type="ECO:0000305" key="3"/>
<comment type="subunit">
    <text evidence="1">Part of the 50S ribosomal subunit. Contacts protein L32.</text>
</comment>
<comment type="similarity">
    <text evidence="1">Belongs to the bacterial ribosomal protein bL17 family.</text>
</comment>
<feature type="chain" id="PRO_0000428207" description="Large ribosomal subunit protein bL17">
    <location>
        <begin position="1"/>
        <end position="180"/>
    </location>
</feature>
<feature type="region of interest" description="Disordered" evidence="2">
    <location>
        <begin position="134"/>
        <end position="180"/>
    </location>
</feature>
<reference key="1">
    <citation type="journal article" date="2002" name="J. Bacteriol.">
        <title>Whole-genome comparison of Mycobacterium tuberculosis clinical and laboratory strains.</title>
        <authorList>
            <person name="Fleischmann R.D."/>
            <person name="Alland D."/>
            <person name="Eisen J.A."/>
            <person name="Carpenter L."/>
            <person name="White O."/>
            <person name="Peterson J.D."/>
            <person name="DeBoy R.T."/>
            <person name="Dodson R.J."/>
            <person name="Gwinn M.L."/>
            <person name="Haft D.H."/>
            <person name="Hickey E.K."/>
            <person name="Kolonay J.F."/>
            <person name="Nelson W.C."/>
            <person name="Umayam L.A."/>
            <person name="Ermolaeva M.D."/>
            <person name="Salzberg S.L."/>
            <person name="Delcher A."/>
            <person name="Utterback T.R."/>
            <person name="Weidman J.F."/>
            <person name="Khouri H.M."/>
            <person name="Gill J."/>
            <person name="Mikula A."/>
            <person name="Bishai W."/>
            <person name="Jacobs W.R. Jr."/>
            <person name="Venter J.C."/>
            <person name="Fraser C.M."/>
        </authorList>
    </citation>
    <scope>NUCLEOTIDE SEQUENCE [LARGE SCALE GENOMIC DNA]</scope>
    <source>
        <strain>CDC 1551 / Oshkosh</strain>
    </source>
</reference>
<keyword id="KW-1185">Reference proteome</keyword>
<keyword id="KW-0687">Ribonucleoprotein</keyword>
<keyword id="KW-0689">Ribosomal protein</keyword>
<gene>
    <name evidence="1" type="primary">rplQ</name>
    <name type="ordered locus">MT3563</name>
</gene>
<dbReference type="EMBL" id="AE000516">
    <property type="protein sequence ID" value="AAK47902.1"/>
    <property type="molecule type" value="Genomic_DNA"/>
</dbReference>
<dbReference type="PIR" id="E70565">
    <property type="entry name" value="E70565"/>
</dbReference>
<dbReference type="RefSeq" id="WP_003917797.1">
    <property type="nucleotide sequence ID" value="NZ_KK341227.1"/>
</dbReference>
<dbReference type="SMR" id="P9WHD2"/>
<dbReference type="KEGG" id="mtc:MT3563"/>
<dbReference type="PATRIC" id="fig|83331.31.peg.3820"/>
<dbReference type="HOGENOM" id="CLU_074407_0_0_11"/>
<dbReference type="Proteomes" id="UP000001020">
    <property type="component" value="Chromosome"/>
</dbReference>
<dbReference type="GO" id="GO:0022625">
    <property type="term" value="C:cytosolic large ribosomal subunit"/>
    <property type="evidence" value="ECO:0007669"/>
    <property type="project" value="TreeGrafter"/>
</dbReference>
<dbReference type="GO" id="GO:0003735">
    <property type="term" value="F:structural constituent of ribosome"/>
    <property type="evidence" value="ECO:0007669"/>
    <property type="project" value="InterPro"/>
</dbReference>
<dbReference type="GO" id="GO:0006412">
    <property type="term" value="P:translation"/>
    <property type="evidence" value="ECO:0007669"/>
    <property type="project" value="UniProtKB-UniRule"/>
</dbReference>
<dbReference type="FunFam" id="3.90.1030.10:FF:000001">
    <property type="entry name" value="50S ribosomal protein L17"/>
    <property type="match status" value="1"/>
</dbReference>
<dbReference type="Gene3D" id="3.90.1030.10">
    <property type="entry name" value="Ribosomal protein L17"/>
    <property type="match status" value="1"/>
</dbReference>
<dbReference type="HAMAP" id="MF_01368">
    <property type="entry name" value="Ribosomal_bL17"/>
    <property type="match status" value="1"/>
</dbReference>
<dbReference type="InterPro" id="IPR000456">
    <property type="entry name" value="Ribosomal_bL17"/>
</dbReference>
<dbReference type="InterPro" id="IPR047859">
    <property type="entry name" value="Ribosomal_bL17_CS"/>
</dbReference>
<dbReference type="InterPro" id="IPR036373">
    <property type="entry name" value="Ribosomal_bL17_sf"/>
</dbReference>
<dbReference type="NCBIfam" id="TIGR00059">
    <property type="entry name" value="L17"/>
    <property type="match status" value="1"/>
</dbReference>
<dbReference type="PANTHER" id="PTHR14413:SF16">
    <property type="entry name" value="LARGE RIBOSOMAL SUBUNIT PROTEIN BL17M"/>
    <property type="match status" value="1"/>
</dbReference>
<dbReference type="PANTHER" id="PTHR14413">
    <property type="entry name" value="RIBOSOMAL PROTEIN L17"/>
    <property type="match status" value="1"/>
</dbReference>
<dbReference type="Pfam" id="PF01196">
    <property type="entry name" value="Ribosomal_L17"/>
    <property type="match status" value="1"/>
</dbReference>
<dbReference type="SUPFAM" id="SSF64263">
    <property type="entry name" value="Prokaryotic ribosomal protein L17"/>
    <property type="match status" value="1"/>
</dbReference>
<dbReference type="PROSITE" id="PS01167">
    <property type="entry name" value="RIBOSOMAL_L17"/>
    <property type="match status" value="1"/>
</dbReference>
<sequence length="180" mass="19505">MPKPTKGPRLGGSSSHQKAILANLATSLFEHGRITTTEPKARALRPYAEKLITHAKKGALHNRREVLKKLRDKDVVHTLFAEIGPFFADRDGGYTRIIKIEARKGDNAPMAVIELVREKTVTSEANRARRVAAAQAKAKKAAAMPTEESEAKPAEEGDVVGASEPDAKAPEEPPTEAPEN</sequence>
<protein>
    <recommendedName>
        <fullName evidence="1">Large ribosomal subunit protein bL17</fullName>
    </recommendedName>
    <alternativeName>
        <fullName evidence="3">50S ribosomal protein L17</fullName>
    </alternativeName>
</protein>
<organism>
    <name type="scientific">Mycobacterium tuberculosis (strain CDC 1551 / Oshkosh)</name>
    <dbReference type="NCBI Taxonomy" id="83331"/>
    <lineage>
        <taxon>Bacteria</taxon>
        <taxon>Bacillati</taxon>
        <taxon>Actinomycetota</taxon>
        <taxon>Actinomycetes</taxon>
        <taxon>Mycobacteriales</taxon>
        <taxon>Mycobacteriaceae</taxon>
        <taxon>Mycobacterium</taxon>
        <taxon>Mycobacterium tuberculosis complex</taxon>
    </lineage>
</organism>
<accession>P9WHD2</accession>
<accession>L0TCK8</accession>
<accession>O06323</accession>
<accession>P0A5V4</accession>
<proteinExistence type="inferred from homology"/>